<name>MYG_ORCOR</name>
<dbReference type="EC" id="1.7.-.-" evidence="1"/>
<dbReference type="EC" id="1.11.1.-" evidence="1"/>
<dbReference type="PIR" id="A92956">
    <property type="entry name" value="MYWHL"/>
</dbReference>
<dbReference type="RefSeq" id="XP_004286254.1">
    <property type="nucleotide sequence ID" value="XM_004286206.3"/>
</dbReference>
<dbReference type="RefSeq" id="XP_004286255.1">
    <property type="nucleotide sequence ID" value="XM_004286207.1"/>
</dbReference>
<dbReference type="SMR" id="P02173"/>
<dbReference type="GeneID" id="101283064"/>
<dbReference type="KEGG" id="oor:101283064"/>
<dbReference type="CTD" id="4151"/>
<dbReference type="OrthoDB" id="3363at9721"/>
<dbReference type="GO" id="GO:0070062">
    <property type="term" value="C:extracellular exosome"/>
    <property type="evidence" value="ECO:0007669"/>
    <property type="project" value="TreeGrafter"/>
</dbReference>
<dbReference type="GO" id="GO:0016528">
    <property type="term" value="C:sarcoplasm"/>
    <property type="evidence" value="ECO:0000250"/>
    <property type="project" value="UniProtKB"/>
</dbReference>
<dbReference type="GO" id="GO:0020037">
    <property type="term" value="F:heme binding"/>
    <property type="evidence" value="ECO:0007669"/>
    <property type="project" value="InterPro"/>
</dbReference>
<dbReference type="GO" id="GO:0046872">
    <property type="term" value="F:metal ion binding"/>
    <property type="evidence" value="ECO:0007669"/>
    <property type="project" value="UniProtKB-KW"/>
</dbReference>
<dbReference type="GO" id="GO:0098809">
    <property type="term" value="F:nitrite reductase activity"/>
    <property type="evidence" value="ECO:0000250"/>
    <property type="project" value="UniProtKB"/>
</dbReference>
<dbReference type="GO" id="GO:0019825">
    <property type="term" value="F:oxygen binding"/>
    <property type="evidence" value="ECO:0007669"/>
    <property type="project" value="InterPro"/>
</dbReference>
<dbReference type="GO" id="GO:0005344">
    <property type="term" value="F:oxygen carrier activity"/>
    <property type="evidence" value="ECO:0000250"/>
    <property type="project" value="UniProtKB"/>
</dbReference>
<dbReference type="GO" id="GO:0004601">
    <property type="term" value="F:peroxidase activity"/>
    <property type="evidence" value="ECO:0000250"/>
    <property type="project" value="UniProtKB"/>
</dbReference>
<dbReference type="GO" id="GO:0019430">
    <property type="term" value="P:removal of superoxide radicals"/>
    <property type="evidence" value="ECO:0000250"/>
    <property type="project" value="UniProtKB"/>
</dbReference>
<dbReference type="CDD" id="cd08926">
    <property type="entry name" value="Mb"/>
    <property type="match status" value="1"/>
</dbReference>
<dbReference type="Gene3D" id="6.10.140.2100">
    <property type="match status" value="1"/>
</dbReference>
<dbReference type="Gene3D" id="6.10.140.2110">
    <property type="match status" value="1"/>
</dbReference>
<dbReference type="InterPro" id="IPR000971">
    <property type="entry name" value="Globin"/>
</dbReference>
<dbReference type="InterPro" id="IPR009050">
    <property type="entry name" value="Globin-like_sf"/>
</dbReference>
<dbReference type="InterPro" id="IPR002335">
    <property type="entry name" value="Myoglobin"/>
</dbReference>
<dbReference type="PANTHER" id="PTHR47132">
    <property type="entry name" value="MYOGLOBIN"/>
    <property type="match status" value="1"/>
</dbReference>
<dbReference type="PANTHER" id="PTHR47132:SF1">
    <property type="entry name" value="MYOGLOBIN"/>
    <property type="match status" value="1"/>
</dbReference>
<dbReference type="Pfam" id="PF00042">
    <property type="entry name" value="Globin"/>
    <property type="match status" value="1"/>
</dbReference>
<dbReference type="PRINTS" id="PR00613">
    <property type="entry name" value="MYOGLOBIN"/>
</dbReference>
<dbReference type="SUPFAM" id="SSF46458">
    <property type="entry name" value="Globin-like"/>
    <property type="match status" value="1"/>
</dbReference>
<dbReference type="PROSITE" id="PS01033">
    <property type="entry name" value="GLOBIN"/>
    <property type="match status" value="1"/>
</dbReference>
<gene>
    <name type="primary">MB</name>
</gene>
<feature type="initiator methionine" description="Removed" evidence="8 9">
    <location>
        <position position="1"/>
    </location>
</feature>
<feature type="chain" id="PRO_0000053324" description="Myoglobin">
    <location>
        <begin position="2"/>
        <end position="154"/>
    </location>
</feature>
<feature type="domain" description="Globin" evidence="7">
    <location>
        <begin position="2"/>
        <end position="148"/>
    </location>
</feature>
<feature type="binding site" evidence="5">
    <location>
        <position position="65"/>
    </location>
    <ligand>
        <name>nitrite</name>
        <dbReference type="ChEBI" id="CHEBI:16301"/>
    </ligand>
</feature>
<feature type="binding site" evidence="3 7">
    <location>
        <position position="65"/>
    </location>
    <ligand>
        <name>O2</name>
        <dbReference type="ChEBI" id="CHEBI:15379"/>
    </ligand>
</feature>
<feature type="binding site" description="proximal binding residue" evidence="1">
    <location>
        <position position="94"/>
    </location>
    <ligand>
        <name>heme b</name>
        <dbReference type="ChEBI" id="CHEBI:60344"/>
    </ligand>
    <ligandPart>
        <name>Fe</name>
        <dbReference type="ChEBI" id="CHEBI:18248"/>
    </ligandPart>
</feature>
<feature type="modified residue" description="Phosphoserine" evidence="6">
    <location>
        <position position="4"/>
    </location>
</feature>
<feature type="modified residue" description="Phosphothreonine" evidence="4">
    <location>
        <position position="68"/>
    </location>
</feature>
<feature type="sequence conflict" description="In Ref. 2; AA sequence." evidence="10" ref="2">
    <original>E</original>
    <variation>Q</variation>
    <location>
        <position position="123"/>
    </location>
</feature>
<protein>
    <recommendedName>
        <fullName>Myoglobin</fullName>
    </recommendedName>
    <alternativeName>
        <fullName evidence="1">Nitrite reductase MB</fullName>
        <ecNumber evidence="1">1.7.-.-</ecNumber>
    </alternativeName>
    <alternativeName>
        <fullName evidence="1">Pseudoperoxidase MB</fullName>
        <ecNumber evidence="1">1.11.1.-</ecNumber>
    </alternativeName>
</protein>
<sequence length="154" mass="17202">MGLSDGEWQLVLNVWGKVEADLAGHGQDILIRLFKGHPETLEKFDKFKHLKTEADMKASEDLKKHGNTVLTALGAILKKKGHHDAELKPLAQSHATKHKIPIKYLEFISEAIIHVLHSRHPAEFGADAQGAMNKALELFRKDIAAKYKELGFHG</sequence>
<accession>P02173</accession>
<organism>
    <name type="scientific">Orcinus orca</name>
    <name type="common">Killer whale</name>
    <name type="synonym">Delphinus orca</name>
    <dbReference type="NCBI Taxonomy" id="9733"/>
    <lineage>
        <taxon>Eukaryota</taxon>
        <taxon>Metazoa</taxon>
        <taxon>Chordata</taxon>
        <taxon>Craniata</taxon>
        <taxon>Vertebrata</taxon>
        <taxon>Euteleostomi</taxon>
        <taxon>Mammalia</taxon>
        <taxon>Eutheria</taxon>
        <taxon>Laurasiatheria</taxon>
        <taxon>Artiodactyla</taxon>
        <taxon>Whippomorpha</taxon>
        <taxon>Cetacea</taxon>
        <taxon>Odontoceti</taxon>
        <taxon>Delphinidae</taxon>
        <taxon>Orcinus</taxon>
    </lineage>
</organism>
<evidence type="ECO:0000250" key="1">
    <source>
        <dbReference type="UniProtKB" id="P02144"/>
    </source>
</evidence>
<evidence type="ECO:0000250" key="2">
    <source>
        <dbReference type="UniProtKB" id="P02185"/>
    </source>
</evidence>
<evidence type="ECO:0000250" key="3">
    <source>
        <dbReference type="UniProtKB" id="P02189"/>
    </source>
</evidence>
<evidence type="ECO:0000250" key="4">
    <source>
        <dbReference type="UniProtKB" id="P04247"/>
    </source>
</evidence>
<evidence type="ECO:0000250" key="5">
    <source>
        <dbReference type="UniProtKB" id="P68082"/>
    </source>
</evidence>
<evidence type="ECO:0000250" key="6">
    <source>
        <dbReference type="UniProtKB" id="Q9QZ76"/>
    </source>
</evidence>
<evidence type="ECO:0000255" key="7">
    <source>
        <dbReference type="PROSITE-ProRule" id="PRU00238"/>
    </source>
</evidence>
<evidence type="ECO:0000269" key="8">
    <source>
    </source>
</evidence>
<evidence type="ECO:0000269" key="9">
    <source>
    </source>
</evidence>
<evidence type="ECO:0000305" key="10"/>
<reference key="1">
    <citation type="journal article" date="1981" name="J. Mol. Evol.">
        <title>Reassignment of residue 122 in the myoglobin from the killer whale, Orcinus orca.</title>
        <authorList>
            <person name="Meuth J.L."/>
            <person name="Jones B.N."/>
            <person name="Gurd F.R.N."/>
        </authorList>
    </citation>
    <scope>PROTEIN SEQUENCE OF 2-154</scope>
    <source>
        <tissue>Skeletal muscle</tissue>
    </source>
</reference>
<reference key="2">
    <citation type="journal article" date="1977" name="Biochim. Biophys. Acta">
        <title>The myoglobin of the killer whale (Orcinus orca).</title>
        <authorList>
            <person name="Castillo O."/>
            <person name="Lehmann H."/>
            <person name="Jones L.T."/>
        </authorList>
    </citation>
    <scope>PROTEIN SEQUENCE OF 2-154</scope>
    <source>
        <tissue>Skeletal muscle</tissue>
    </source>
</reference>
<comment type="function">
    <text evidence="1">Monomeric heme protein which primary function is to store oxygen and facilitate its diffusion within muscle tissues. Reversibly binds oxygen through a pentacoordinated heme iron and enables its timely and efficient release as needed during periods of heightened demand. Depending on the oxidative conditions of tissues and cells, and in addition to its ability to bind oxygen, it also has a nitrite reductase activity whereby it regulates the production of bioactive nitric oxide. Under stress conditions, like hypoxia and anoxia, it also protects cells against reactive oxygen species thanks to its pseudoperoxidase activity.</text>
</comment>
<comment type="catalytic activity">
    <reaction evidence="1">
        <text>Fe(III)-heme b-[protein] + nitric oxide + H2O = Fe(II)-heme b-[protein] + nitrite + 2 H(+)</text>
        <dbReference type="Rhea" id="RHEA:77711"/>
        <dbReference type="Rhea" id="RHEA-COMP:18975"/>
        <dbReference type="Rhea" id="RHEA-COMP:18976"/>
        <dbReference type="ChEBI" id="CHEBI:15377"/>
        <dbReference type="ChEBI" id="CHEBI:15378"/>
        <dbReference type="ChEBI" id="CHEBI:16301"/>
        <dbReference type="ChEBI" id="CHEBI:16480"/>
        <dbReference type="ChEBI" id="CHEBI:55376"/>
        <dbReference type="ChEBI" id="CHEBI:60344"/>
    </reaction>
    <physiologicalReaction direction="right-to-left" evidence="1">
        <dbReference type="Rhea" id="RHEA:77713"/>
    </physiologicalReaction>
</comment>
<comment type="catalytic activity">
    <reaction evidence="1">
        <text>H2O2 + AH2 = A + 2 H2O</text>
        <dbReference type="Rhea" id="RHEA:30275"/>
        <dbReference type="ChEBI" id="CHEBI:13193"/>
        <dbReference type="ChEBI" id="CHEBI:15377"/>
        <dbReference type="ChEBI" id="CHEBI:16240"/>
        <dbReference type="ChEBI" id="CHEBI:17499"/>
    </reaction>
</comment>
<comment type="subunit">
    <text evidence="2">Monomeric.</text>
</comment>
<comment type="subcellular location">
    <subcellularLocation>
        <location evidence="1">Cytoplasm</location>
        <location evidence="1">Sarcoplasm</location>
    </subcellularLocation>
</comment>
<comment type="similarity">
    <text evidence="7">Belongs to the globin family.</text>
</comment>
<keyword id="KW-0963">Cytoplasm</keyword>
<keyword id="KW-0903">Direct protein sequencing</keyword>
<keyword id="KW-0349">Heme</keyword>
<keyword id="KW-0408">Iron</keyword>
<keyword id="KW-0479">Metal-binding</keyword>
<keyword id="KW-0514">Muscle protein</keyword>
<keyword id="KW-0560">Oxidoreductase</keyword>
<keyword id="KW-0561">Oxygen transport</keyword>
<keyword id="KW-0597">Phosphoprotein</keyword>
<keyword id="KW-0813">Transport</keyword>
<proteinExistence type="evidence at protein level"/>